<comment type="function">
    <text evidence="1">Regulation of oxygen dependent gene expression. It modulates the expression of Iso-1 (CYP1) and Iso-2 (CYP3) cytochrome c. In response to heme, promotes transcription of genes encoding functions required for respiration, controlling oxidative damage and repression of anaerobic genes. Binds to the sequence 5'-CGGNNNTNNCGG-3'. Is non-functional in terms of iso-1 cytochrome c expression in strain S288c and its derivatives (By similarity).</text>
</comment>
<comment type="subunit">
    <text evidence="1">Binds DNA as a homodimer. Interacts with SRO9 and YDJ1. In the absence of heme, binds to at least four cellular proteins, including YDJ1 and SRO9, forming a high-molecular-weight complex (HMC) which results in repression of its activity and dictates its DNA-binding specificity (By similarity).</text>
</comment>
<comment type="subcellular location">
    <subcellularLocation>
        <location evidence="3">Nucleus</location>
    </subcellularLocation>
</comment>
<comment type="miscellaneous">
    <text evidence="1">Heme is an effector molecule for CYP1/HAP1. The HRM repeat region mediates heme induction by masking the DNA-binding domain in the absence of inducer (By similarity).</text>
</comment>
<feature type="chain" id="PRO_0000415343" description="Heme-responsive zinc finger transcription factor HAP1">
    <location>
        <begin position="1"/>
        <end position="1480"/>
    </location>
</feature>
<feature type="repeat" description="HRM 1">
    <location>
        <begin position="280"/>
        <end position="285"/>
    </location>
</feature>
<feature type="repeat" description="HRM 2">
    <location>
        <begin position="296"/>
        <end position="301"/>
    </location>
</feature>
<feature type="repeat" description="HRM 3">
    <location>
        <begin position="320"/>
        <end position="325"/>
    </location>
</feature>
<feature type="repeat" description="HRM 4">
    <location>
        <begin position="344"/>
        <end position="349"/>
    </location>
</feature>
<feature type="repeat" description="HRM 5">
    <location>
        <begin position="386"/>
        <end position="391"/>
    </location>
</feature>
<feature type="repeat" description="HRM 6">
    <location>
        <begin position="412"/>
        <end position="417"/>
    </location>
</feature>
<feature type="repeat" description="HRM 7">
    <location>
        <begin position="1189"/>
        <end position="1194"/>
    </location>
</feature>
<feature type="DNA-binding region" description="Zn(2)-C6 fungal-type" evidence="3">
    <location>
        <begin position="64"/>
        <end position="93"/>
    </location>
</feature>
<feature type="region of interest" description="Disordered" evidence="4">
    <location>
        <begin position="1"/>
        <end position="56"/>
    </location>
</feature>
<feature type="region of interest" description="Disordered" evidence="4">
    <location>
        <begin position="126"/>
        <end position="208"/>
    </location>
</feature>
<feature type="region of interest" description="Heme-responsive; required for HMC formation" evidence="1">
    <location>
        <begin position="244"/>
        <end position="441"/>
    </location>
</feature>
<feature type="region of interest" description="Disordered" evidence="4">
    <location>
        <begin position="429"/>
        <end position="456"/>
    </location>
</feature>
<feature type="region of interest" description="Disordered" evidence="4">
    <location>
        <begin position="703"/>
        <end position="764"/>
    </location>
</feature>
<feature type="region of interest" description="Disordered" evidence="4">
    <location>
        <begin position="1381"/>
        <end position="1408"/>
    </location>
</feature>
<feature type="coiled-coil region" evidence="2">
    <location>
        <begin position="105"/>
        <end position="134"/>
    </location>
</feature>
<feature type="compositionally biased region" description="Polar residues" evidence="4">
    <location>
        <begin position="1"/>
        <end position="50"/>
    </location>
</feature>
<feature type="compositionally biased region" description="Low complexity" evidence="4">
    <location>
        <begin position="130"/>
        <end position="142"/>
    </location>
</feature>
<feature type="compositionally biased region" description="Polar residues" evidence="4">
    <location>
        <begin position="143"/>
        <end position="152"/>
    </location>
</feature>
<feature type="compositionally biased region" description="Polar residues" evidence="4">
    <location>
        <begin position="160"/>
        <end position="176"/>
    </location>
</feature>
<feature type="compositionally biased region" description="Low complexity" evidence="4">
    <location>
        <begin position="177"/>
        <end position="208"/>
    </location>
</feature>
<feature type="compositionally biased region" description="Polar residues" evidence="4">
    <location>
        <begin position="429"/>
        <end position="444"/>
    </location>
</feature>
<feature type="compositionally biased region" description="Polar residues" evidence="4">
    <location>
        <begin position="703"/>
        <end position="731"/>
    </location>
</feature>
<feature type="compositionally biased region" description="Low complexity" evidence="4">
    <location>
        <begin position="732"/>
        <end position="756"/>
    </location>
</feature>
<feature type="compositionally biased region" description="Polar residues" evidence="4">
    <location>
        <begin position="1385"/>
        <end position="1408"/>
    </location>
</feature>
<feature type="binding site" evidence="1">
    <location>
        <position position="64"/>
    </location>
    <ligand>
        <name>Zn(2+)</name>
        <dbReference type="ChEBI" id="CHEBI:29105"/>
        <label>1</label>
    </ligand>
</feature>
<feature type="binding site" evidence="1">
    <location>
        <position position="64"/>
    </location>
    <ligand>
        <name>Zn(2+)</name>
        <dbReference type="ChEBI" id="CHEBI:29105"/>
        <label>2</label>
    </ligand>
</feature>
<feature type="binding site" evidence="1">
    <location>
        <position position="67"/>
    </location>
    <ligand>
        <name>Zn(2+)</name>
        <dbReference type="ChEBI" id="CHEBI:29105"/>
        <label>1</label>
    </ligand>
</feature>
<feature type="binding site" evidence="1">
    <location>
        <position position="74"/>
    </location>
    <ligand>
        <name>Zn(2+)</name>
        <dbReference type="ChEBI" id="CHEBI:29105"/>
        <label>1</label>
    </ligand>
</feature>
<feature type="binding site" evidence="1">
    <location>
        <position position="81"/>
    </location>
    <ligand>
        <name>Zn(2+)</name>
        <dbReference type="ChEBI" id="CHEBI:29105"/>
        <label>1</label>
    </ligand>
</feature>
<feature type="binding site" evidence="1">
    <location>
        <position position="81"/>
    </location>
    <ligand>
        <name>Zn(2+)</name>
        <dbReference type="ChEBI" id="CHEBI:29105"/>
        <label>2</label>
    </ligand>
</feature>
<feature type="binding site" evidence="1">
    <location>
        <position position="84"/>
    </location>
    <ligand>
        <name>Zn(2+)</name>
        <dbReference type="ChEBI" id="CHEBI:29105"/>
        <label>2</label>
    </ligand>
</feature>
<feature type="binding site" evidence="1">
    <location>
        <position position="93"/>
    </location>
    <ligand>
        <name>Zn(2+)</name>
        <dbReference type="ChEBI" id="CHEBI:29105"/>
        <label>2</label>
    </ligand>
</feature>
<feature type="sequence conflict" description="In Ref. 2; BAD35005." evidence="5" ref="2">
    <original>L</original>
    <variation>S</variation>
    <location>
        <position position="621"/>
    </location>
</feature>
<feature type="sequence conflict" description="In Ref. 2; BAD35005." evidence="5" ref="2">
    <original>F</original>
    <variation>S</variation>
    <location>
        <position position="953"/>
    </location>
</feature>
<feature type="sequence conflict" description="In Ref. 2; BAD35005." evidence="5" ref="2">
    <original>D</original>
    <variation>G</variation>
    <location>
        <position position="1099"/>
    </location>
</feature>
<organism>
    <name type="scientific">Saccharomyces cerevisiae (strain Kyokai no. 7 / NBRC 101557)</name>
    <name type="common">Baker's yeast</name>
    <dbReference type="NCBI Taxonomy" id="721032"/>
    <lineage>
        <taxon>Eukaryota</taxon>
        <taxon>Fungi</taxon>
        <taxon>Dikarya</taxon>
        <taxon>Ascomycota</taxon>
        <taxon>Saccharomycotina</taxon>
        <taxon>Saccharomycetes</taxon>
        <taxon>Saccharomycetales</taxon>
        <taxon>Saccharomycetaceae</taxon>
        <taxon>Saccharomyces</taxon>
    </lineage>
</organism>
<keyword id="KW-0010">Activator</keyword>
<keyword id="KW-0175">Coiled coil</keyword>
<keyword id="KW-0238">DNA-binding</keyword>
<keyword id="KW-0349">Heme</keyword>
<keyword id="KW-0408">Iron</keyword>
<keyword id="KW-0479">Metal-binding</keyword>
<keyword id="KW-0539">Nucleus</keyword>
<keyword id="KW-0677">Repeat</keyword>
<keyword id="KW-0804">Transcription</keyword>
<keyword id="KW-0805">Transcription regulation</keyword>
<keyword id="KW-0862">Zinc</keyword>
<reference key="1">
    <citation type="journal article" date="2011" name="DNA Res.">
        <title>Whole-genome sequencing of sake yeast Saccharomyces cerevisiae Kyokai no. 7.</title>
        <authorList>
            <person name="Akao T."/>
            <person name="Yashiro I."/>
            <person name="Hosoyama A."/>
            <person name="Kitagaki H."/>
            <person name="Horikawa H."/>
            <person name="Watanabe D."/>
            <person name="Akada R."/>
            <person name="Ando Y."/>
            <person name="Harashima S."/>
            <person name="Inoue T."/>
            <person name="Inoue Y."/>
            <person name="Kajiwara S."/>
            <person name="Kitamoto K."/>
            <person name="Kitamoto N."/>
            <person name="Kobayashi O."/>
            <person name="Kuhara S."/>
            <person name="Masubuchi T."/>
            <person name="Mizoguchi H."/>
            <person name="Nakao Y."/>
            <person name="Nakazato A."/>
            <person name="Namise M."/>
            <person name="Oba T."/>
            <person name="Ogata T."/>
            <person name="Ohta A."/>
            <person name="Sato M."/>
            <person name="Shibasaki S."/>
            <person name="Takatsume Y."/>
            <person name="Tanimoto S."/>
            <person name="Tsuboi H."/>
            <person name="Nishimura A."/>
            <person name="Yoda K."/>
            <person name="Ishikawa T."/>
            <person name="Iwashita K."/>
            <person name="Fujita N."/>
            <person name="Shimoi H."/>
        </authorList>
    </citation>
    <scope>NUCLEOTIDE SEQUENCE [LARGE SCALE GENOMIC DNA] OF 1-815 AND 892-1480</scope>
    <source>
        <strain>Kyokai no. 7 / NBRC 101557</strain>
    </source>
</reference>
<reference key="2">
    <citation type="journal article" date="2004" name="J. Biosci. Bioeng.">
        <title>A hap1 mutation in a laboratory strain of Saccharomyces cerevisiae results in decreased expression of ergosterol-related genes and cellular ergosterol content compared to sake yeast.</title>
        <authorList>
            <person name="Tamura K."/>
            <person name="Gu Y."/>
            <person name="Wang Q."/>
            <person name="Yamada T."/>
            <person name="Ito K."/>
            <person name="Shimoi H."/>
        </authorList>
    </citation>
    <scope>NUCLEOTIDE SEQUENCE [GENOMIC DNA] OF 505-1480</scope>
    <source>
        <strain>Kyokai no. 7 / NBRC 101557</strain>
    </source>
</reference>
<name>HAP1_YEASK</name>
<proteinExistence type="inferred from homology"/>
<accession>G2WJ80</accession>
<accession>G2WJ81</accession>
<accession>P0CE42</accession>
<accession>P12351</accession>
<accession>Q06574</accession>
<accession>Q6BD21</accession>
<evidence type="ECO:0000250" key="1"/>
<evidence type="ECO:0000255" key="2"/>
<evidence type="ECO:0000255" key="3">
    <source>
        <dbReference type="PROSITE-ProRule" id="PRU00227"/>
    </source>
</evidence>
<evidence type="ECO:0000256" key="4">
    <source>
        <dbReference type="SAM" id="MobiDB-lite"/>
    </source>
</evidence>
<evidence type="ECO:0000305" key="5"/>
<protein>
    <recommendedName>
        <fullName>Heme-responsive zinc finger transcription factor HAP1</fullName>
    </recommendedName>
    <alternativeName>
        <fullName>CYP1 activatory protein</fullName>
    </alternativeName>
    <alternativeName>
        <fullName>Heme activator protein 1</fullName>
    </alternativeName>
</protein>
<dbReference type="EMBL" id="DG000048">
    <property type="protein sequence ID" value="GAA25123.1"/>
    <property type="molecule type" value="Genomic_DNA"/>
</dbReference>
<dbReference type="EMBL" id="DG000048">
    <property type="protein sequence ID" value="GAA25124.1"/>
    <property type="molecule type" value="Genomic_DNA"/>
</dbReference>
<dbReference type="EMBL" id="AB161977">
    <property type="protein sequence ID" value="BAD35005.1"/>
    <property type="molecule type" value="Genomic_DNA"/>
</dbReference>
<dbReference type="SMR" id="G2WJ80"/>
<dbReference type="HOGENOM" id="CLU_346690_0_0_1"/>
<dbReference type="OrthoDB" id="40778at4893"/>
<dbReference type="Proteomes" id="UP000001608">
    <property type="component" value="Chromosome 12"/>
</dbReference>
<dbReference type="GO" id="GO:0005634">
    <property type="term" value="C:nucleus"/>
    <property type="evidence" value="ECO:0007669"/>
    <property type="project" value="UniProtKB-SubCell"/>
</dbReference>
<dbReference type="GO" id="GO:0001228">
    <property type="term" value="F:DNA-binding transcription activator activity, RNA polymerase II-specific"/>
    <property type="evidence" value="ECO:0007669"/>
    <property type="project" value="TreeGrafter"/>
</dbReference>
<dbReference type="GO" id="GO:0000978">
    <property type="term" value="F:RNA polymerase II cis-regulatory region sequence-specific DNA binding"/>
    <property type="evidence" value="ECO:0007669"/>
    <property type="project" value="TreeGrafter"/>
</dbReference>
<dbReference type="GO" id="GO:0008270">
    <property type="term" value="F:zinc ion binding"/>
    <property type="evidence" value="ECO:0007669"/>
    <property type="project" value="InterPro"/>
</dbReference>
<dbReference type="GO" id="GO:0006351">
    <property type="term" value="P:DNA-templated transcription"/>
    <property type="evidence" value="ECO:0007669"/>
    <property type="project" value="InterPro"/>
</dbReference>
<dbReference type="CDD" id="cd12148">
    <property type="entry name" value="fungal_TF_MHR"/>
    <property type="match status" value="1"/>
</dbReference>
<dbReference type="CDD" id="cd00067">
    <property type="entry name" value="GAL4"/>
    <property type="match status" value="1"/>
</dbReference>
<dbReference type="CDD" id="cd14655">
    <property type="entry name" value="ZIP_Hap1"/>
    <property type="match status" value="1"/>
</dbReference>
<dbReference type="FunFam" id="4.10.240.10:FF:000014">
    <property type="entry name" value="HAP1p Zinc finger transcription factor"/>
    <property type="match status" value="1"/>
</dbReference>
<dbReference type="Gene3D" id="1.20.5.170">
    <property type="match status" value="1"/>
</dbReference>
<dbReference type="Gene3D" id="4.10.240.10">
    <property type="entry name" value="Zn(2)-C6 fungal-type DNA-binding domain"/>
    <property type="match status" value="1"/>
</dbReference>
<dbReference type="InterPro" id="IPR046347">
    <property type="entry name" value="bZIP_sf"/>
</dbReference>
<dbReference type="InterPro" id="IPR051430">
    <property type="entry name" value="Fungal_TF_Env_Response"/>
</dbReference>
<dbReference type="InterPro" id="IPR007219">
    <property type="entry name" value="Transcription_factor_dom_fun"/>
</dbReference>
<dbReference type="InterPro" id="IPR036864">
    <property type="entry name" value="Zn2-C6_fun-type_DNA-bd_sf"/>
</dbReference>
<dbReference type="InterPro" id="IPR001138">
    <property type="entry name" value="Zn2Cys6_DnaBD"/>
</dbReference>
<dbReference type="PANTHER" id="PTHR31944">
    <property type="entry name" value="HEME-RESPONSIVE ZINC FINGER TRANSCRIPTION FACTOR HAP1"/>
    <property type="match status" value="1"/>
</dbReference>
<dbReference type="PANTHER" id="PTHR31944:SF131">
    <property type="entry name" value="HEME-RESPONSIVE ZINC FINGER TRANSCRIPTION FACTOR HAP1"/>
    <property type="match status" value="1"/>
</dbReference>
<dbReference type="Pfam" id="PF00172">
    <property type="entry name" value="Zn_clus"/>
    <property type="match status" value="1"/>
</dbReference>
<dbReference type="SMART" id="SM00906">
    <property type="entry name" value="Fungal_trans"/>
    <property type="match status" value="1"/>
</dbReference>
<dbReference type="SMART" id="SM00066">
    <property type="entry name" value="GAL4"/>
    <property type="match status" value="1"/>
</dbReference>
<dbReference type="SUPFAM" id="SSF57959">
    <property type="entry name" value="Leucine zipper domain"/>
    <property type="match status" value="1"/>
</dbReference>
<dbReference type="SUPFAM" id="SSF57701">
    <property type="entry name" value="Zn2/Cys6 DNA-binding domain"/>
    <property type="match status" value="1"/>
</dbReference>
<dbReference type="PROSITE" id="PS00463">
    <property type="entry name" value="ZN2_CY6_FUNGAL_1"/>
    <property type="match status" value="1"/>
</dbReference>
<dbReference type="PROSITE" id="PS50048">
    <property type="entry name" value="ZN2_CY6_FUNGAL_2"/>
    <property type="match status" value="1"/>
</dbReference>
<gene>
    <name type="primary">HAP1</name>
    <name type="synonym">CYP1</name>
    <name type="ORF">SYK7_048311/048321</name>
</gene>
<sequence length="1480" mass="164008">MSNTPYNSSVPSIASMTQSSVSRSPNMHTATTPGANTSSNSPPLHMSSDSSKIKRKRNRIPLSCTICRKRKVKCDKLRPHCQQCTKTGVAHLCHYMEQTWAEEAEKELLKDNELKKLRERVKSLEKTLSKVHSSPSSNSLKSYNTPESSNLFMGNDEHTTLVNANTGSASSASHMHQQQQQQQQQEQQQDFSRSANANANSSSLSISNKYDNDELDLTKDFDLLHIKSNGTIHLGATHWLSIMKGDPYLKLLWGHIFAMREKLNEWYYQKNSYSKLKSSKCPINHAQAPPSAATRKCPVDHSAFSSGMVAPKEETPLPRKCPVDHTMFSSGMIPPREDTSSQKRCPVDHTMYSAGMMPPKDETPSPFSTKAMIDHNKHTMNPPQSKCPVDHRNYMKEYPSDMANSSSNPASRCPIDHSSMKNTAALPASTHNTIPHHQPQSGSHARSHPAQSRKHDSYMTESEVLATLCEMLPPKRVIALFIEKFFKHLYPAIPILDEQNFKNHMNQMLSLSSMNPTVNNFGMSMPSSSTLENQPITQINLPKLSDSCNLGILIIILRLTWLSIPSNSCEVDLGEESGSFLVPNESSNMSASALTSMAKEESLLLKHETPVEALELCQKYLIKFDELSNISNNNVNLTTVQFAIFYNFYMKSASNDLTTLTNTNNTGMANPGHDSESHQILLSNITQMAFSCGLHRDPDNFPQLNATIPATSQDVSNNGSKKANPSTNPTLNNNMSAATTNSSSRSGSADSRSGSNPVNKKENQVSIERFKHTWRKIWYYIVSMDVNQSLSLGSPRLLRNLRDFSDTKLPSASRIDYVRDIKELIIVKNFTLFFQIDLCIIAVLNHILNVSLARSVRKFELDSLINLLKNLTYGTENVNDVVGSLINKGLLPTSEGGSVDSNNDEIYGLPKLPDILNHGQHNQNLYADGRNTSSSDIDKKLDLPHESTTRALFFSKHMTIRMLLYLLNYILFTHYEPMGSEDPGTNILAKEYAQEALNFAMDGYRNCMIFFNNIRNTNSLFDYMNVILSYPCLDIGHRSLQFIVCLILRAKCGPLTGMRESSIITNGTSSGFNSSVEDEDVKVKQESSDELKKDDFMKDVNLDSGDSLAEILMSRMLLFQKLTKQLSKKYNYAIRMNKSTGFFVSLLDTPSKKSDSKSGGSSFMLGNWKHPKVSNMSGFLAGDKDQLQKCPVYQDALGFVSPTGANEGSAPMQGMSLQGSTARMGGTQLPPIRSYKPITYTSSNLRRMNETGEAEAKRRRFNDGYIDNNSNNDIPRGISPKPSNGLSSVQPLLSSFSMNQLNGGTIPTVPSLTNITSQMGALPSLDRITTNQINLPDPSRDEAFDNSIKQMTPMTSAFMNANTTIPSSTLNGNMNMNGAGTANTDTSANGSALSTLTSPQGSDLASNSATQYKPDLEDFLMQNSNFNGLMINPSSLVEVVGGYNDPNNLGRNDAVDFLPVDNVEIDGLVDFYRADFPIWE</sequence>